<name>FORD2_AQUAE</name>
<protein>
    <recommendedName>
        <fullName>Ferredoxin oxidoreductase 2 subunit ForD</fullName>
        <ecNumber>1.-.-.-</ecNumber>
    </recommendedName>
    <alternativeName>
        <fullName>Ferredoxin oxidoreductase 2 subunit delta</fullName>
    </alternativeName>
</protein>
<sequence>MYFVADVKEKECAQYNCKQCVLFCPEPNCLNFKASTNSAWVWYDRCKGCEICVYVCSDLLKRHCIEMVMVTPKATAKS</sequence>
<evidence type="ECO:0000250" key="1"/>
<evidence type="ECO:0000255" key="2"/>
<evidence type="ECO:0000255" key="3">
    <source>
        <dbReference type="PROSITE-ProRule" id="PRU00711"/>
    </source>
</evidence>
<keyword id="KW-0004">4Fe-4S</keyword>
<keyword id="KW-0249">Electron transport</keyword>
<keyword id="KW-0408">Iron</keyword>
<keyword id="KW-0411">Iron-sulfur</keyword>
<keyword id="KW-0479">Metal-binding</keyword>
<keyword id="KW-0560">Oxidoreductase</keyword>
<keyword id="KW-1185">Reference proteome</keyword>
<keyword id="KW-0677">Repeat</keyword>
<keyword id="KW-0813">Transport</keyword>
<proteinExistence type="inferred from homology"/>
<dbReference type="EC" id="1.-.-.-"/>
<dbReference type="EMBL" id="AE000657">
    <property type="protein sequence ID" value="AAC07200.1"/>
    <property type="molecule type" value="Genomic_DNA"/>
</dbReference>
<dbReference type="PIR" id="E70400">
    <property type="entry name" value="E70400"/>
</dbReference>
<dbReference type="RefSeq" id="NP_213796.1">
    <property type="nucleotide sequence ID" value="NC_000918.1"/>
</dbReference>
<dbReference type="RefSeq" id="WP_010880734.1">
    <property type="nucleotide sequence ID" value="NC_000918.1"/>
</dbReference>
<dbReference type="SMR" id="O67232"/>
<dbReference type="STRING" id="224324.aq_1171a"/>
<dbReference type="EnsemblBacteria" id="AAC07200">
    <property type="protein sequence ID" value="AAC07200"/>
    <property type="gene ID" value="aq_1171a"/>
</dbReference>
<dbReference type="KEGG" id="aae:aq_1171a"/>
<dbReference type="PATRIC" id="fig|224324.8.peg.909"/>
<dbReference type="eggNOG" id="COG1144">
    <property type="taxonomic scope" value="Bacteria"/>
</dbReference>
<dbReference type="HOGENOM" id="CLU_175364_0_0_0"/>
<dbReference type="InParanoid" id="O67232"/>
<dbReference type="OrthoDB" id="9794954at2"/>
<dbReference type="Proteomes" id="UP000000798">
    <property type="component" value="Chromosome"/>
</dbReference>
<dbReference type="GO" id="GO:0051539">
    <property type="term" value="F:4 iron, 4 sulfur cluster binding"/>
    <property type="evidence" value="ECO:0007669"/>
    <property type="project" value="UniProtKB-KW"/>
</dbReference>
<dbReference type="GO" id="GO:0046872">
    <property type="term" value="F:metal ion binding"/>
    <property type="evidence" value="ECO:0007669"/>
    <property type="project" value="UniProtKB-KW"/>
</dbReference>
<dbReference type="GO" id="GO:0016491">
    <property type="term" value="F:oxidoreductase activity"/>
    <property type="evidence" value="ECO:0007669"/>
    <property type="project" value="UniProtKB-KW"/>
</dbReference>
<dbReference type="Gene3D" id="3.30.70.20">
    <property type="match status" value="1"/>
</dbReference>
<dbReference type="InterPro" id="IPR017896">
    <property type="entry name" value="4Fe4S_Fe-S-bd"/>
</dbReference>
<dbReference type="SUPFAM" id="SSF54862">
    <property type="entry name" value="4Fe-4S ferredoxins"/>
    <property type="match status" value="1"/>
</dbReference>
<dbReference type="PROSITE" id="PS51379">
    <property type="entry name" value="4FE4S_FER_2"/>
    <property type="match status" value="2"/>
</dbReference>
<organism>
    <name type="scientific">Aquifex aeolicus (strain VF5)</name>
    <dbReference type="NCBI Taxonomy" id="224324"/>
    <lineage>
        <taxon>Bacteria</taxon>
        <taxon>Pseudomonadati</taxon>
        <taxon>Aquificota</taxon>
        <taxon>Aquificia</taxon>
        <taxon>Aquificales</taxon>
        <taxon>Aquificaceae</taxon>
        <taxon>Aquifex</taxon>
    </lineage>
</organism>
<accession>O67232</accession>
<comment type="cofactor">
    <cofactor evidence="1">
        <name>[4Fe-4S] cluster</name>
        <dbReference type="ChEBI" id="CHEBI:49883"/>
    </cofactor>
    <text evidence="1">Binds 2 [4Fe-4S] clusters.</text>
</comment>
<comment type="subunit">
    <text evidence="1">Heterotetramer of one alpha, one beta, one delta and one gamma chain.</text>
</comment>
<gene>
    <name type="primary">forD2</name>
    <name type="synonym">fdx2</name>
    <name type="ordered locus">aq_1171</name>
    <name type="ORF">aq_1171A</name>
</gene>
<feature type="chain" id="PRO_0000099965" description="Ferredoxin oxidoreductase 2 subunit ForD">
    <location>
        <begin position="1"/>
        <end position="78"/>
    </location>
</feature>
<feature type="domain" description="4Fe-4S ferredoxin-type 1" evidence="3">
    <location>
        <begin position="3"/>
        <end position="35"/>
    </location>
</feature>
<feature type="domain" description="4Fe-4S ferredoxin-type 2" evidence="3">
    <location>
        <begin position="37"/>
        <end position="66"/>
    </location>
</feature>
<feature type="binding site" evidence="2">
    <location>
        <position position="12"/>
    </location>
    <ligand>
        <name>[4Fe-4S] cluster</name>
        <dbReference type="ChEBI" id="CHEBI:49883"/>
        <label>1</label>
    </ligand>
</feature>
<feature type="binding site" evidence="2">
    <location>
        <position position="17"/>
    </location>
    <ligand>
        <name>[4Fe-4S] cluster</name>
        <dbReference type="ChEBI" id="CHEBI:49883"/>
        <label>1</label>
    </ligand>
</feature>
<feature type="binding site" evidence="2">
    <location>
        <position position="20"/>
    </location>
    <ligand>
        <name>[4Fe-4S] cluster</name>
        <dbReference type="ChEBI" id="CHEBI:49883"/>
        <label>1</label>
    </ligand>
</feature>
<feature type="binding site" evidence="2">
    <location>
        <position position="24"/>
    </location>
    <ligand>
        <name>[4Fe-4S] cluster</name>
        <dbReference type="ChEBI" id="CHEBI:49883"/>
        <label>2</label>
    </ligand>
</feature>
<feature type="binding site" evidence="2">
    <location>
        <position position="46"/>
    </location>
    <ligand>
        <name>[4Fe-4S] cluster</name>
        <dbReference type="ChEBI" id="CHEBI:49883"/>
        <label>2</label>
    </ligand>
</feature>
<feature type="binding site" evidence="2">
    <location>
        <position position="49"/>
    </location>
    <ligand>
        <name>[4Fe-4S] cluster</name>
        <dbReference type="ChEBI" id="CHEBI:49883"/>
        <label>2</label>
    </ligand>
</feature>
<feature type="binding site" evidence="2">
    <location>
        <position position="52"/>
    </location>
    <ligand>
        <name>[4Fe-4S] cluster</name>
        <dbReference type="ChEBI" id="CHEBI:49883"/>
        <label>2</label>
    </ligand>
</feature>
<feature type="binding site" evidence="2">
    <location>
        <position position="56"/>
    </location>
    <ligand>
        <name>[4Fe-4S] cluster</name>
        <dbReference type="ChEBI" id="CHEBI:49883"/>
        <label>1</label>
    </ligand>
</feature>
<reference key="1">
    <citation type="journal article" date="1998" name="Nature">
        <title>The complete genome of the hyperthermophilic bacterium Aquifex aeolicus.</title>
        <authorList>
            <person name="Deckert G."/>
            <person name="Warren P.V."/>
            <person name="Gaasterland T."/>
            <person name="Young W.G."/>
            <person name="Lenox A.L."/>
            <person name="Graham D.E."/>
            <person name="Overbeek R."/>
            <person name="Snead M.A."/>
            <person name="Keller M."/>
            <person name="Aujay M."/>
            <person name="Huber R."/>
            <person name="Feldman R.A."/>
            <person name="Short J.M."/>
            <person name="Olsen G.J."/>
            <person name="Swanson R.V."/>
        </authorList>
    </citation>
    <scope>NUCLEOTIDE SEQUENCE [LARGE SCALE GENOMIC DNA]</scope>
    <source>
        <strain>VF5</strain>
    </source>
</reference>